<accession>Q0VCP3</accession>
<organism>
    <name type="scientific">Bos taurus</name>
    <name type="common">Bovine</name>
    <dbReference type="NCBI Taxonomy" id="9913"/>
    <lineage>
        <taxon>Eukaryota</taxon>
        <taxon>Metazoa</taxon>
        <taxon>Chordata</taxon>
        <taxon>Craniata</taxon>
        <taxon>Vertebrata</taxon>
        <taxon>Euteleostomi</taxon>
        <taxon>Mammalia</taxon>
        <taxon>Eutheria</taxon>
        <taxon>Laurasiatheria</taxon>
        <taxon>Artiodactyla</taxon>
        <taxon>Ruminantia</taxon>
        <taxon>Pecora</taxon>
        <taxon>Bovidae</taxon>
        <taxon>Bovinae</taxon>
        <taxon>Bos</taxon>
    </lineage>
</organism>
<protein>
    <recommendedName>
        <fullName>Olfactomedin-like protein 3</fullName>
    </recommendedName>
</protein>
<comment type="function">
    <text evidence="1">Secreted scaffold protein that plays an essential role in dorsoventral patterning during early development. Stabilizes axial formation by restricting chordin (CHRD) activity on the dorsal side. Acts by facilitating the association between the tolloid proteases and their substrate chordin (CHRD), leading to enhance chordin (CHRD) degradation (By similarity). May have matrix-related function involved in placental and embryonic development, or play a similar role in other physiological processes (By similarity).</text>
</comment>
<comment type="subcellular location">
    <subcellularLocation>
        <location evidence="1">Secreted</location>
    </subcellularLocation>
</comment>
<comment type="similarity">
    <text evidence="4">Belongs to the OLFML3 family.</text>
</comment>
<reference key="1">
    <citation type="submission" date="2006-08" db="EMBL/GenBank/DDBJ databases">
        <authorList>
            <consortium name="NIH - Mammalian Gene Collection (MGC) project"/>
        </authorList>
    </citation>
    <scope>NUCLEOTIDE SEQUENCE [LARGE SCALE MRNA]</scope>
    <source>
        <strain>Hereford</strain>
        <tissue>Fetal pons</tissue>
    </source>
</reference>
<name>OLFL3_BOVIN</name>
<feature type="signal peptide" evidence="2">
    <location>
        <begin position="1"/>
        <end position="21"/>
    </location>
</feature>
<feature type="chain" id="PRO_0000361560" description="Olfactomedin-like protein 3">
    <location>
        <begin position="22"/>
        <end position="406"/>
    </location>
</feature>
<feature type="domain" description="Olfactomedin-like" evidence="3">
    <location>
        <begin position="134"/>
        <end position="401"/>
    </location>
</feature>
<feature type="coiled-coil region" evidence="2">
    <location>
        <begin position="22"/>
        <end position="101"/>
    </location>
</feature>
<feature type="glycosylation site" description="N-linked (GlcNAc...) asparagine" evidence="2">
    <location>
        <position position="248"/>
    </location>
</feature>
<feature type="disulfide bond" evidence="3">
    <location>
        <begin position="135"/>
        <end position="328"/>
    </location>
</feature>
<sequence>MGPHTQLLILLLLSWLGPLQGQQHHLVEYMERRLAALEERLAQCQDQSSRHAAELRDFKNKMLPLLEVAEKEREALRTEADTISGRVDRLEREVDYLETQNPALPCVEVDEKVTGGPGTKGKGRRNEKYDMITDCGYTISQVRSMKILKRFGGPAGLWTKDPLGPAEKIYVLDGTQNDTAFVFPRLRDFTLAMAARKASRVRVPFPWVGTGQLVYGGFLYYARRPPGGPGGGGELQNTLQLIKFHLANRTVVDSSVFPAEGLIPPYGLTADTYIDLAADEEGLWAVYATREDDRHLCLAKLDPQTLDTEQQWDTPCPRENAEAAFVICGTLYVVYNTRPASRARIQCSFDASGTLTPERAALPYFPRRYGAHASLRYNPRERQLYAWDDGYQIVYKLEMRKKEEEV</sequence>
<evidence type="ECO:0000250" key="1"/>
<evidence type="ECO:0000255" key="2"/>
<evidence type="ECO:0000255" key="3">
    <source>
        <dbReference type="PROSITE-ProRule" id="PRU00446"/>
    </source>
</evidence>
<evidence type="ECO:0000305" key="4"/>
<proteinExistence type="evidence at transcript level"/>
<keyword id="KW-0175">Coiled coil</keyword>
<keyword id="KW-0217">Developmental protein</keyword>
<keyword id="KW-1015">Disulfide bond</keyword>
<keyword id="KW-0325">Glycoprotein</keyword>
<keyword id="KW-1185">Reference proteome</keyword>
<keyword id="KW-0964">Secreted</keyword>
<keyword id="KW-0732">Signal</keyword>
<dbReference type="EMBL" id="BC120075">
    <property type="protein sequence ID" value="AAI20076.1"/>
    <property type="molecule type" value="mRNA"/>
</dbReference>
<dbReference type="RefSeq" id="NP_001068665.1">
    <property type="nucleotide sequence ID" value="NM_001075197.1"/>
</dbReference>
<dbReference type="SMR" id="Q0VCP3"/>
<dbReference type="FunCoup" id="Q0VCP3">
    <property type="interactions" value="308"/>
</dbReference>
<dbReference type="STRING" id="9913.ENSBTAP00000015056"/>
<dbReference type="GlyCosmos" id="Q0VCP3">
    <property type="glycosylation" value="1 site, No reported glycans"/>
</dbReference>
<dbReference type="GlyGen" id="Q0VCP3">
    <property type="glycosylation" value="1 site"/>
</dbReference>
<dbReference type="PaxDb" id="9913-ENSBTAP00000015056"/>
<dbReference type="GeneID" id="505318"/>
<dbReference type="KEGG" id="bta:505318"/>
<dbReference type="CTD" id="56944"/>
<dbReference type="eggNOG" id="KOG3545">
    <property type="taxonomic scope" value="Eukaryota"/>
</dbReference>
<dbReference type="HOGENOM" id="CLU_035236_2_1_1"/>
<dbReference type="InParanoid" id="Q0VCP3"/>
<dbReference type="OrthoDB" id="8626508at2759"/>
<dbReference type="TreeFam" id="TF352000"/>
<dbReference type="Proteomes" id="UP000009136">
    <property type="component" value="Unplaced"/>
</dbReference>
<dbReference type="GO" id="GO:0005615">
    <property type="term" value="C:extracellular space"/>
    <property type="evidence" value="ECO:0000318"/>
    <property type="project" value="GO_Central"/>
</dbReference>
<dbReference type="GO" id="GO:0007165">
    <property type="term" value="P:signal transduction"/>
    <property type="evidence" value="ECO:0000318"/>
    <property type="project" value="GO_Central"/>
</dbReference>
<dbReference type="InterPro" id="IPR003112">
    <property type="entry name" value="Olfac-like_dom"/>
</dbReference>
<dbReference type="InterPro" id="IPR050605">
    <property type="entry name" value="Olfactomedin-like_domain"/>
</dbReference>
<dbReference type="PANTHER" id="PTHR23192:SF8">
    <property type="entry name" value="OLFACTOMEDIN-LIKE PROTEIN 3"/>
    <property type="match status" value="1"/>
</dbReference>
<dbReference type="PANTHER" id="PTHR23192">
    <property type="entry name" value="OLFACTOMEDIN-RELATED"/>
    <property type="match status" value="1"/>
</dbReference>
<dbReference type="Pfam" id="PF02191">
    <property type="entry name" value="OLF"/>
    <property type="match status" value="1"/>
</dbReference>
<dbReference type="SMART" id="SM00284">
    <property type="entry name" value="OLF"/>
    <property type="match status" value="1"/>
</dbReference>
<dbReference type="PROSITE" id="PS51132">
    <property type="entry name" value="OLF"/>
    <property type="match status" value="1"/>
</dbReference>
<gene>
    <name type="primary">OLFML3</name>
</gene>